<keyword id="KW-1185">Reference proteome</keyword>
<evidence type="ECO:0000269" key="1">
    <source>
    </source>
</evidence>
<evidence type="ECO:0000303" key="2">
    <source ref="1"/>
</evidence>
<evidence type="ECO:0000312" key="3">
    <source>
        <dbReference type="HGNC" id="HGNC:24687"/>
    </source>
</evidence>
<gene>
    <name evidence="3" type="primary">LINC01554</name>
    <name evidence="3" type="synonym">C5orf27</name>
</gene>
<accession>Q52M75</accession>
<accession>B2RBN1</accession>
<accession>Q86YS4</accession>
<proteinExistence type="predicted"/>
<organism>
    <name type="scientific">Homo sapiens</name>
    <name type="common">Human</name>
    <dbReference type="NCBI Taxonomy" id="9606"/>
    <lineage>
        <taxon>Eukaryota</taxon>
        <taxon>Metazoa</taxon>
        <taxon>Chordata</taxon>
        <taxon>Craniata</taxon>
        <taxon>Vertebrata</taxon>
        <taxon>Euteleostomi</taxon>
        <taxon>Mammalia</taxon>
        <taxon>Eutheria</taxon>
        <taxon>Euarchontoglires</taxon>
        <taxon>Primates</taxon>
        <taxon>Haplorrhini</taxon>
        <taxon>Catarrhini</taxon>
        <taxon>Hominidae</taxon>
        <taxon>Homo</taxon>
    </lineage>
</organism>
<reference key="1">
    <citation type="submission" date="2002-10" db="EMBL/GenBank/DDBJ databases">
        <authorList>
            <person name="Kong X.P."/>
            <person name="Tong M.H."/>
            <person name="Chen S.Q."/>
        </authorList>
    </citation>
    <scope>NUCLEOTIDE SEQUENCE [MRNA]</scope>
    <source>
        <tissue>Liver</tissue>
    </source>
</reference>
<reference key="2">
    <citation type="journal article" date="2004" name="Nat. Genet.">
        <title>Complete sequencing and characterization of 21,243 full-length human cDNAs.</title>
        <authorList>
            <person name="Ota T."/>
            <person name="Suzuki Y."/>
            <person name="Nishikawa T."/>
            <person name="Otsuki T."/>
            <person name="Sugiyama T."/>
            <person name="Irie R."/>
            <person name="Wakamatsu A."/>
            <person name="Hayashi K."/>
            <person name="Sato H."/>
            <person name="Nagai K."/>
            <person name="Kimura K."/>
            <person name="Makita H."/>
            <person name="Sekine M."/>
            <person name="Obayashi M."/>
            <person name="Nishi T."/>
            <person name="Shibahara T."/>
            <person name="Tanaka T."/>
            <person name="Ishii S."/>
            <person name="Yamamoto J."/>
            <person name="Saito K."/>
            <person name="Kawai Y."/>
            <person name="Isono Y."/>
            <person name="Nakamura Y."/>
            <person name="Nagahari K."/>
            <person name="Murakami K."/>
            <person name="Yasuda T."/>
            <person name="Iwayanagi T."/>
            <person name="Wagatsuma M."/>
            <person name="Shiratori A."/>
            <person name="Sudo H."/>
            <person name="Hosoiri T."/>
            <person name="Kaku Y."/>
            <person name="Kodaira H."/>
            <person name="Kondo H."/>
            <person name="Sugawara M."/>
            <person name="Takahashi M."/>
            <person name="Kanda K."/>
            <person name="Yokoi T."/>
            <person name="Furuya T."/>
            <person name="Kikkawa E."/>
            <person name="Omura Y."/>
            <person name="Abe K."/>
            <person name="Kamihara K."/>
            <person name="Katsuta N."/>
            <person name="Sato K."/>
            <person name="Tanikawa M."/>
            <person name="Yamazaki M."/>
            <person name="Ninomiya K."/>
            <person name="Ishibashi T."/>
            <person name="Yamashita H."/>
            <person name="Murakawa K."/>
            <person name="Fujimori K."/>
            <person name="Tanai H."/>
            <person name="Kimata M."/>
            <person name="Watanabe M."/>
            <person name="Hiraoka S."/>
            <person name="Chiba Y."/>
            <person name="Ishida S."/>
            <person name="Ono Y."/>
            <person name="Takiguchi S."/>
            <person name="Watanabe S."/>
            <person name="Yosida M."/>
            <person name="Hotuta T."/>
            <person name="Kusano J."/>
            <person name="Kanehori K."/>
            <person name="Takahashi-Fujii A."/>
            <person name="Hara H."/>
            <person name="Tanase T.-O."/>
            <person name="Nomura Y."/>
            <person name="Togiya S."/>
            <person name="Komai F."/>
            <person name="Hara R."/>
            <person name="Takeuchi K."/>
            <person name="Arita M."/>
            <person name="Imose N."/>
            <person name="Musashino K."/>
            <person name="Yuuki H."/>
            <person name="Oshima A."/>
            <person name="Sasaki N."/>
            <person name="Aotsuka S."/>
            <person name="Yoshikawa Y."/>
            <person name="Matsunawa H."/>
            <person name="Ichihara T."/>
            <person name="Shiohata N."/>
            <person name="Sano S."/>
            <person name="Moriya S."/>
            <person name="Momiyama H."/>
            <person name="Satoh N."/>
            <person name="Takami S."/>
            <person name="Terashima Y."/>
            <person name="Suzuki O."/>
            <person name="Nakagawa S."/>
            <person name="Senoh A."/>
            <person name="Mizoguchi H."/>
            <person name="Goto Y."/>
            <person name="Shimizu F."/>
            <person name="Wakebe H."/>
            <person name="Hishigaki H."/>
            <person name="Watanabe T."/>
            <person name="Sugiyama A."/>
            <person name="Takemoto M."/>
            <person name="Kawakami B."/>
            <person name="Yamazaki M."/>
            <person name="Watanabe K."/>
            <person name="Kumagai A."/>
            <person name="Itakura S."/>
            <person name="Fukuzumi Y."/>
            <person name="Fujimori Y."/>
            <person name="Komiyama M."/>
            <person name="Tashiro H."/>
            <person name="Tanigami A."/>
            <person name="Fujiwara T."/>
            <person name="Ono T."/>
            <person name="Yamada K."/>
            <person name="Fujii Y."/>
            <person name="Ozaki K."/>
            <person name="Hirao M."/>
            <person name="Ohmori Y."/>
            <person name="Kawabata A."/>
            <person name="Hikiji T."/>
            <person name="Kobatake N."/>
            <person name="Inagaki H."/>
            <person name="Ikema Y."/>
            <person name="Okamoto S."/>
            <person name="Okitani R."/>
            <person name="Kawakami T."/>
            <person name="Noguchi S."/>
            <person name="Itoh T."/>
            <person name="Shigeta K."/>
            <person name="Senba T."/>
            <person name="Matsumura K."/>
            <person name="Nakajima Y."/>
            <person name="Mizuno T."/>
            <person name="Morinaga M."/>
            <person name="Sasaki M."/>
            <person name="Togashi T."/>
            <person name="Oyama M."/>
            <person name="Hata H."/>
            <person name="Watanabe M."/>
            <person name="Komatsu T."/>
            <person name="Mizushima-Sugano J."/>
            <person name="Satoh T."/>
            <person name="Shirai Y."/>
            <person name="Takahashi Y."/>
            <person name="Nakagawa K."/>
            <person name="Okumura K."/>
            <person name="Nagase T."/>
            <person name="Nomura N."/>
            <person name="Kikuchi H."/>
            <person name="Masuho Y."/>
            <person name="Yamashita R."/>
            <person name="Nakai K."/>
            <person name="Yada T."/>
            <person name="Nakamura Y."/>
            <person name="Ohara O."/>
            <person name="Isogai T."/>
            <person name="Sugano S."/>
        </authorList>
    </citation>
    <scope>NUCLEOTIDE SEQUENCE [LARGE SCALE MRNA]</scope>
    <source>
        <tissue>Testis</tissue>
    </source>
</reference>
<reference key="3">
    <citation type="submission" date="2005-07" db="EMBL/GenBank/DDBJ databases">
        <authorList>
            <person name="Mural R.J."/>
            <person name="Istrail S."/>
            <person name="Sutton G.G."/>
            <person name="Florea L."/>
            <person name="Halpern A.L."/>
            <person name="Mobarry C.M."/>
            <person name="Lippert R."/>
            <person name="Walenz B."/>
            <person name="Shatkay H."/>
            <person name="Dew I."/>
            <person name="Miller J.R."/>
            <person name="Flanigan M.J."/>
            <person name="Edwards N.J."/>
            <person name="Bolanos R."/>
            <person name="Fasulo D."/>
            <person name="Halldorsson B.V."/>
            <person name="Hannenhalli S."/>
            <person name="Turner R."/>
            <person name="Yooseph S."/>
            <person name="Lu F."/>
            <person name="Nusskern D.R."/>
            <person name="Shue B.C."/>
            <person name="Zheng X.H."/>
            <person name="Zhong F."/>
            <person name="Delcher A.L."/>
            <person name="Huson D.H."/>
            <person name="Kravitz S.A."/>
            <person name="Mouchard L."/>
            <person name="Reinert K."/>
            <person name="Remington K.A."/>
            <person name="Clark A.G."/>
            <person name="Waterman M.S."/>
            <person name="Eichler E.E."/>
            <person name="Adams M.D."/>
            <person name="Hunkapiller M.W."/>
            <person name="Myers E.W."/>
            <person name="Venter J.C."/>
        </authorList>
    </citation>
    <scope>NUCLEOTIDE SEQUENCE [LARGE SCALE GENOMIC DNA]</scope>
</reference>
<reference key="4">
    <citation type="journal article" date="2004" name="Genome Res.">
        <title>The status, quality, and expansion of the NIH full-length cDNA project: the Mammalian Gene Collection (MGC).</title>
        <authorList>
            <consortium name="The MGC Project Team"/>
        </authorList>
    </citation>
    <scope>NUCLEOTIDE SEQUENCE [LARGE SCALE MRNA]</scope>
    <scope>VARIANT CYS-85</scope>
    <source>
        <tissue>Liver</tissue>
    </source>
</reference>
<name>CE027_HUMAN</name>
<protein>
    <recommendedName>
        <fullName evidence="3">Putative uncharacterized protein encoded by LINC01554</fullName>
    </recommendedName>
    <alternativeName>
        <fullName evidence="2">Protein FIS</fullName>
    </alternativeName>
</protein>
<sequence length="96" mass="10857">MTPCLESFCQRAKDCKQNIPLPFLIQDWPLSESKPQGQDFWTPQPLQAAAPSHEFQQVALHPARTRLASRPQGGRLMSSREVGLRAPRCSCGKRKR</sequence>
<feature type="chain" id="PRO_0000304979" description="Putative uncharacterized protein encoded by LINC01554">
    <location>
        <begin position="1"/>
        <end position="96"/>
    </location>
</feature>
<feature type="sequence variant" id="VAR_035138" description="In dbSNP:rs17366761." evidence="1">
    <original>R</original>
    <variation>C</variation>
    <location>
        <position position="85"/>
    </location>
</feature>
<dbReference type="EMBL" id="AY168789">
    <property type="protein sequence ID" value="AAO25675.1"/>
    <property type="molecule type" value="mRNA"/>
</dbReference>
<dbReference type="EMBL" id="AK314737">
    <property type="protein sequence ID" value="BAG37278.1"/>
    <property type="molecule type" value="mRNA"/>
</dbReference>
<dbReference type="EMBL" id="CH471084">
    <property type="protein sequence ID" value="EAW96058.1"/>
    <property type="molecule type" value="Genomic_DNA"/>
</dbReference>
<dbReference type="EMBL" id="BC093643">
    <property type="status" value="NOT_ANNOTATED_CDS"/>
    <property type="molecule type" value="mRNA"/>
</dbReference>
<dbReference type="EMBL" id="BC101577">
    <property type="status" value="NOT_ANNOTATED_CDS"/>
    <property type="molecule type" value="mRNA"/>
</dbReference>
<dbReference type="BioMuta" id="HGNC:24687"/>
<dbReference type="AGR" id="HGNC:24687"/>
<dbReference type="GeneCards" id="LINC01554"/>
<dbReference type="HGNC" id="HGNC:24687">
    <property type="gene designation" value="LINC01554"/>
</dbReference>
<dbReference type="neXtProt" id="NX_Q52M75"/>
<dbReference type="InParanoid" id="Q52M75"/>
<dbReference type="PAN-GO" id="Q52M75">
    <property type="GO annotations" value="0 GO annotations based on evolutionary models"/>
</dbReference>
<dbReference type="PhylomeDB" id="Q52M75"/>
<dbReference type="TreeFam" id="TF341120"/>
<dbReference type="PathwayCommons" id="Q52M75"/>
<dbReference type="Pharos" id="Q52M75">
    <property type="development level" value="Tdark"/>
</dbReference>
<dbReference type="PRO" id="PR:Q52M75"/>
<dbReference type="Proteomes" id="UP000005640">
    <property type="component" value="Unplaced"/>
</dbReference>
<dbReference type="RNAct" id="Q52M75">
    <property type="molecule type" value="protein"/>
</dbReference>